<proteinExistence type="inferred from homology"/>
<sequence>MSSELMFNYTFSWPAGPKDVILTGTFDDWRGTLPLVKTAKGNFEITMPVKLANKDDTFQFKFIVDGVWCVSDSYKKEHVSEGIENNFLQITDLVETQEVAGASRIPEAGGLLCGKPPRSAGPPSTSNRKKNKRNNKKRRSKLKKKSTKNNKKSNESLDDNEEEDGVTGTTTEDVTGTSREETPLAEPTNVSKEAPGNFHILPIDQSADTTKSNGIIGGPGPVLVPNPGEIKEFTEIRDVDARELNERLNKKEEVPEPVAGPIVESSVTEKSPALPQADDPIVETKEVAHNVQELTPQVEAVTPLINEPEPLPTPEAQISIPESSKVEPVEGSLQSKLVEKRESTEGVLDGSKKVENKAKKDEEVFTLDPIVNKAPKLPLTDEQTAEGRKSPAVSEEKEKKKKQEKGSKEVKRSETSKEKKPSAKEVKKQTVKASKKQTASPLSSSTEEPKKKKTGFFGKLKKLFK</sequence>
<keyword id="KW-0238">DNA-binding</keyword>
<keyword id="KW-0597">Phosphoprotein</keyword>
<accession>E7KPJ0</accession>
<comment type="function">
    <text evidence="1">Cruciform DNA-binding protein which exerts an enhancing effect on the cleavage of cruciform DNA (X-DNA) by endonuclease VII from bacteriophage T4.</text>
</comment>
<comment type="PTM">
    <text evidence="1">Cleaved in the vicinity of position 160 to give an X-DNA-binding N-terminal subpeptide and a non-DNA-binding C-terminal subpeptide.</text>
</comment>
<comment type="similarity">
    <text evidence="4">Belongs to the CRP1/MDG1 family.</text>
</comment>
<comment type="sequence caution" evidence="4">
    <conflict type="erroneous initiation">
        <sequence resource="EMBL-CDS" id="EGA82552"/>
    </conflict>
    <text>Truncated N-terminus.</text>
</comment>
<organism>
    <name type="scientific">Saccharomyces cerevisiae (strain Lalvin QA23)</name>
    <name type="common">Baker's yeast</name>
    <dbReference type="NCBI Taxonomy" id="764098"/>
    <lineage>
        <taxon>Eukaryota</taxon>
        <taxon>Fungi</taxon>
        <taxon>Dikarya</taxon>
        <taxon>Ascomycota</taxon>
        <taxon>Saccharomycotina</taxon>
        <taxon>Saccharomycetes</taxon>
        <taxon>Saccharomycetales</taxon>
        <taxon>Saccharomycetaceae</taxon>
        <taxon>Saccharomyces</taxon>
    </lineage>
</organism>
<feature type="chain" id="PRO_0000409614" description="Cruciform DNA-recognizing protein 1">
    <location>
        <begin position="1"/>
        <end position="465"/>
    </location>
</feature>
<feature type="chain" id="PRO_0000409615" description="CRP1 short N-terminal subpeptide" evidence="1">
    <location>
        <begin position="1"/>
        <end position="160"/>
    </location>
</feature>
<feature type="chain" id="PRO_0000409616" description="CRP1 short C-terminal subpeptide" evidence="1">
    <location>
        <begin position="161"/>
        <end position="465"/>
    </location>
</feature>
<feature type="region of interest" description="Disordered" evidence="3">
    <location>
        <begin position="107"/>
        <end position="227"/>
    </location>
</feature>
<feature type="region of interest" description="X-DNA-binding" evidence="1">
    <location>
        <begin position="160"/>
        <end position="161"/>
    </location>
</feature>
<feature type="region of interest" description="Disordered" evidence="3">
    <location>
        <begin position="247"/>
        <end position="276"/>
    </location>
</feature>
<feature type="region of interest" description="Disordered" evidence="3">
    <location>
        <begin position="298"/>
        <end position="465"/>
    </location>
</feature>
<feature type="compositionally biased region" description="Basic residues" evidence="3">
    <location>
        <begin position="127"/>
        <end position="151"/>
    </location>
</feature>
<feature type="compositionally biased region" description="Acidic residues" evidence="3">
    <location>
        <begin position="156"/>
        <end position="165"/>
    </location>
</feature>
<feature type="compositionally biased region" description="Low complexity" evidence="3">
    <location>
        <begin position="166"/>
        <end position="177"/>
    </location>
</feature>
<feature type="compositionally biased region" description="Basic and acidic residues" evidence="3">
    <location>
        <begin position="337"/>
        <end position="363"/>
    </location>
</feature>
<feature type="compositionally biased region" description="Basic and acidic residues" evidence="3">
    <location>
        <begin position="385"/>
        <end position="398"/>
    </location>
</feature>
<feature type="compositionally biased region" description="Basic and acidic residues" evidence="3">
    <location>
        <begin position="404"/>
        <end position="428"/>
    </location>
</feature>
<feature type="compositionally biased region" description="Basic residues" evidence="3">
    <location>
        <begin position="451"/>
        <end position="465"/>
    </location>
</feature>
<feature type="modified residue" description="Phosphoserine" evidence="2">
    <location>
        <position position="153"/>
    </location>
</feature>
<feature type="modified residue" description="Phosphoserine" evidence="2">
    <location>
        <position position="156"/>
    </location>
</feature>
<feature type="modified residue" description="Phosphothreonine" evidence="2">
    <location>
        <position position="182"/>
    </location>
</feature>
<feature type="modified residue" description="Phosphoserine" evidence="2">
    <location>
        <position position="271"/>
    </location>
</feature>
<feature type="modified residue" description="Phosphothreonine" evidence="2">
    <location>
        <position position="295"/>
    </location>
</feature>
<feature type="modified residue" description="Phosphoserine" evidence="2">
    <location>
        <position position="319"/>
    </location>
</feature>
<feature type="modified residue" description="Phosphoserine" evidence="2">
    <location>
        <position position="343"/>
    </location>
</feature>
<feature type="modified residue" description="Phosphothreonine" evidence="2">
    <location>
        <position position="366"/>
    </location>
</feature>
<feature type="modified residue" description="Phosphoserine" evidence="2">
    <location>
        <position position="394"/>
    </location>
</feature>
<feature type="modified residue" description="Phosphoserine" evidence="2">
    <location>
        <position position="440"/>
    </location>
</feature>
<name>CRP1_YEASL</name>
<gene>
    <name type="primary">CRP1</name>
    <name type="ORF">QA23_2200</name>
</gene>
<reference key="1">
    <citation type="journal article" date="2011" name="PLoS Genet.">
        <title>Whole-genome comparison reveals novel genetic elements that characterize the genome of industrial strains of Saccharomyces cerevisiae.</title>
        <authorList>
            <person name="Borneman A.R."/>
            <person name="Desany B.A."/>
            <person name="Riches D."/>
            <person name="Affourtit J.P."/>
            <person name="Forgan A.H."/>
            <person name="Pretorius I.S."/>
            <person name="Egholm M."/>
            <person name="Chambers P.J."/>
        </authorList>
    </citation>
    <scope>NUCLEOTIDE SEQUENCE [LARGE SCALE GENOMIC DNA]</scope>
    <source>
        <strain>Lalvin QA23</strain>
    </source>
</reference>
<protein>
    <recommendedName>
        <fullName>Cruciform DNA-recognizing protein 1</fullName>
    </recommendedName>
    <component>
        <recommendedName>
            <fullName>CRP1 short N-terminal subpeptide</fullName>
        </recommendedName>
    </component>
    <component>
        <recommendedName>
            <fullName>CRP1 short C-terminal subpeptide</fullName>
        </recommendedName>
    </component>
</protein>
<evidence type="ECO:0000250" key="1"/>
<evidence type="ECO:0000250" key="2">
    <source>
        <dbReference type="UniProtKB" id="P38845"/>
    </source>
</evidence>
<evidence type="ECO:0000256" key="3">
    <source>
        <dbReference type="SAM" id="MobiDB-lite"/>
    </source>
</evidence>
<evidence type="ECO:0000305" key="4"/>
<dbReference type="EMBL" id="ADVV01000041">
    <property type="protein sequence ID" value="EGA82552.1"/>
    <property type="status" value="ALT_INIT"/>
    <property type="molecule type" value="Genomic_DNA"/>
</dbReference>
<dbReference type="SMR" id="E7KPJ0"/>
<dbReference type="HOGENOM" id="CLU_594765_0_0_1"/>
<dbReference type="OrthoDB" id="40992at4893"/>
<dbReference type="GO" id="GO:0005737">
    <property type="term" value="C:cytoplasm"/>
    <property type="evidence" value="ECO:0007669"/>
    <property type="project" value="TreeGrafter"/>
</dbReference>
<dbReference type="GO" id="GO:0031588">
    <property type="term" value="C:nucleotide-activated protein kinase complex"/>
    <property type="evidence" value="ECO:0007669"/>
    <property type="project" value="TreeGrafter"/>
</dbReference>
<dbReference type="GO" id="GO:0005634">
    <property type="term" value="C:nucleus"/>
    <property type="evidence" value="ECO:0007669"/>
    <property type="project" value="TreeGrafter"/>
</dbReference>
<dbReference type="GO" id="GO:0003677">
    <property type="term" value="F:DNA binding"/>
    <property type="evidence" value="ECO:0007669"/>
    <property type="project" value="UniProtKB-KW"/>
</dbReference>
<dbReference type="GO" id="GO:0019901">
    <property type="term" value="F:protein kinase binding"/>
    <property type="evidence" value="ECO:0007669"/>
    <property type="project" value="TreeGrafter"/>
</dbReference>
<dbReference type="GO" id="GO:0007165">
    <property type="term" value="P:signal transduction"/>
    <property type="evidence" value="ECO:0007669"/>
    <property type="project" value="TreeGrafter"/>
</dbReference>
<dbReference type="CDD" id="cd02859">
    <property type="entry name" value="E_set_AMPKbeta_like_N"/>
    <property type="match status" value="1"/>
</dbReference>
<dbReference type="FunFam" id="2.60.40.10:FF:001765">
    <property type="entry name" value="Cruciform DNA-recognizing protein 1"/>
    <property type="match status" value="1"/>
</dbReference>
<dbReference type="Gene3D" id="2.60.40.10">
    <property type="entry name" value="Immunoglobulins"/>
    <property type="match status" value="1"/>
</dbReference>
<dbReference type="InterPro" id="IPR032640">
    <property type="entry name" value="AMPK1_CBM"/>
</dbReference>
<dbReference type="InterPro" id="IPR050827">
    <property type="entry name" value="CRP1_MDG1_kinase"/>
</dbReference>
<dbReference type="InterPro" id="IPR013783">
    <property type="entry name" value="Ig-like_fold"/>
</dbReference>
<dbReference type="InterPro" id="IPR014756">
    <property type="entry name" value="Ig_E-set"/>
</dbReference>
<dbReference type="PANTHER" id="PTHR10343">
    <property type="entry name" value="5'-AMP-ACTIVATED PROTEIN KINASE , BETA SUBUNIT"/>
    <property type="match status" value="1"/>
</dbReference>
<dbReference type="PANTHER" id="PTHR10343:SF81">
    <property type="entry name" value="CRUCIFORM DNA-RECOGNIZING PROTEIN 1-RELATED"/>
    <property type="match status" value="1"/>
</dbReference>
<dbReference type="Pfam" id="PF16561">
    <property type="entry name" value="AMPK1_CBM"/>
    <property type="match status" value="1"/>
</dbReference>
<dbReference type="SUPFAM" id="SSF81296">
    <property type="entry name" value="E set domains"/>
    <property type="match status" value="1"/>
</dbReference>